<evidence type="ECO:0000256" key="1">
    <source>
        <dbReference type="SAM" id="MobiDB-lite"/>
    </source>
</evidence>
<evidence type="ECO:0000269" key="2">
    <source>
    </source>
</evidence>
<evidence type="ECO:0000269" key="3">
    <source>
    </source>
</evidence>
<evidence type="ECO:0000269" key="4">
    <source>
    </source>
</evidence>
<evidence type="ECO:0000269" key="5">
    <source>
    </source>
</evidence>
<evidence type="ECO:0000269" key="6">
    <source>
    </source>
</evidence>
<evidence type="ECO:0000303" key="7">
    <source>
    </source>
</evidence>
<evidence type="ECO:0000303" key="8">
    <source>
    </source>
</evidence>
<evidence type="ECO:0000305" key="9"/>
<evidence type="ECO:0000305" key="10">
    <source>
    </source>
</evidence>
<evidence type="ECO:0000305" key="11">
    <source>
    </source>
</evidence>
<evidence type="ECO:0007744" key="12">
    <source>
    </source>
</evidence>
<evidence type="ECO:0007829" key="13">
    <source>
        <dbReference type="PDB" id="4U4R"/>
    </source>
</evidence>
<gene>
    <name evidence="8" type="primary">RPL29</name>
    <name type="synonym">YL43</name>
    <name type="ordered locus">YFR032C-A</name>
    <name type="ORF">YFR032BW</name>
</gene>
<name>RL29_YEAST</name>
<sequence>MAKSKNHTAHNQTRKAHRNGIKKPKTYKYPSLKGVDPKFRRNHKHALHGTAKALAAAKK</sequence>
<feature type="initiator methionine" description="Removed" evidence="2 5">
    <location>
        <position position="1"/>
    </location>
</feature>
<feature type="chain" id="PRO_0000219141" description="Large ribosomal subunit protein eL29">
    <location>
        <begin position="2"/>
        <end position="59"/>
    </location>
</feature>
<feature type="region of interest" description="Disordered" evidence="1">
    <location>
        <begin position="1"/>
        <end position="37"/>
    </location>
</feature>
<feature type="compositionally biased region" description="Basic residues" evidence="1">
    <location>
        <begin position="1"/>
        <end position="26"/>
    </location>
</feature>
<feature type="cross-link" description="Glycyl lysine isopeptide (Lys-Gly) (interchain with G-Cter in ubiquitin)" evidence="12">
    <location>
        <position position="52"/>
    </location>
</feature>
<feature type="helix" evidence="13">
    <location>
        <begin position="12"/>
        <end position="18"/>
    </location>
</feature>
<feature type="helix" evidence="13">
    <location>
        <begin position="37"/>
        <end position="55"/>
    </location>
</feature>
<feature type="helix" evidence="13">
    <location>
        <begin position="56"/>
        <end position="58"/>
    </location>
</feature>
<proteinExistence type="evidence at protein level"/>
<comment type="function">
    <text evidence="10">Component of the ribosome, a large ribonucleoprotein complex responsible for the synthesis of proteins in the cell. The small ribosomal subunit (SSU) binds messenger RNAs (mRNAs) and translates the encoded message by selecting cognate aminoacyl-transfer RNA (tRNA) molecules. The large subunit (LSU) contains the ribosomal catalytic site termed the peptidyl transferase center (PTC), which catalyzes the formation of peptide bonds, thereby polymerizing the amino acids delivered by tRNAs into a polypeptide chain. The nascent polypeptides leave the ribosome through a tunnel in the LSU and interact with protein factors that function in enzymatic processing, targeting, and the membrane insertion of nascent chains at the exit of the ribosomal tunnel.</text>
</comment>
<comment type="subunit">
    <text evidence="6 11">Component of the large ribosomal subunit (LSU). Mature yeast ribosomes consist of a small (40S) and a large (60S) subunit. The 40S small subunit contains 1 molecule of ribosomal RNA (18S rRNA) and 33 different proteins (encoded by 57 genes). The large 60S subunit contains 3 rRNA molecules (25S, 5.8S and 5S rRNA) and 46 different proteins (encoded by 81 genes) (PubMed:22096102, PubMed:9559554).</text>
</comment>
<comment type="subcellular location">
    <subcellularLocation>
        <location evidence="3 6">Cytoplasm</location>
    </subcellularLocation>
</comment>
<comment type="miscellaneous">
    <text evidence="4">Present with 51100 molecules/cell in log phase SD medium.</text>
</comment>
<comment type="similarity">
    <text evidence="9">Belongs to the eukaryotic ribosomal protein eL29 family.</text>
</comment>
<keyword id="KW-0002">3D-structure</keyword>
<keyword id="KW-0963">Cytoplasm</keyword>
<keyword id="KW-0903">Direct protein sequencing</keyword>
<keyword id="KW-1017">Isopeptide bond</keyword>
<keyword id="KW-1185">Reference proteome</keyword>
<keyword id="KW-0687">Ribonucleoprotein</keyword>
<keyword id="KW-0689">Ribosomal protein</keyword>
<keyword id="KW-0832">Ubl conjugation</keyword>
<reference key="1">
    <citation type="journal article" date="1995" name="Nat. Genet.">
        <title>Analysis of the nucleotide sequence of chromosome VI from Saccharomyces cerevisiae.</title>
        <authorList>
            <person name="Murakami Y."/>
            <person name="Naitou M."/>
            <person name="Hagiwara H."/>
            <person name="Shibata T."/>
            <person name="Ozawa M."/>
            <person name="Sasanuma S."/>
            <person name="Sasanuma M."/>
            <person name="Tsuchiya Y."/>
            <person name="Soeda E."/>
            <person name="Yokoyama K."/>
            <person name="Yamazaki M."/>
            <person name="Tashiro H."/>
            <person name="Eki T."/>
        </authorList>
    </citation>
    <scope>NUCLEOTIDE SEQUENCE [LARGE SCALE GENOMIC DNA]</scope>
    <source>
        <strain>ATCC 204508 / S288c</strain>
    </source>
</reference>
<reference key="2">
    <citation type="journal article" date="2014" name="G3 (Bethesda)">
        <title>The reference genome sequence of Saccharomyces cerevisiae: Then and now.</title>
        <authorList>
            <person name="Engel S.R."/>
            <person name="Dietrich F.S."/>
            <person name="Fisk D.G."/>
            <person name="Binkley G."/>
            <person name="Balakrishnan R."/>
            <person name="Costanzo M.C."/>
            <person name="Dwight S.S."/>
            <person name="Hitz B.C."/>
            <person name="Karra K."/>
            <person name="Nash R.S."/>
            <person name="Weng S."/>
            <person name="Wong E.D."/>
            <person name="Lloyd P."/>
            <person name="Skrzypek M.S."/>
            <person name="Miyasato S.R."/>
            <person name="Simison M."/>
            <person name="Cherry J.M."/>
        </authorList>
    </citation>
    <scope>GENOME REANNOTATION</scope>
    <source>
        <strain>ATCC 204508 / S288c</strain>
    </source>
</reference>
<reference key="3">
    <citation type="journal article" date="2007" name="Genome Res.">
        <title>Approaching a complete repository of sequence-verified protein-encoding clones for Saccharomyces cerevisiae.</title>
        <authorList>
            <person name="Hu Y."/>
            <person name="Rolfs A."/>
            <person name="Bhullar B."/>
            <person name="Murthy T.V.S."/>
            <person name="Zhu C."/>
            <person name="Berger M.F."/>
            <person name="Camargo A.A."/>
            <person name="Kelley F."/>
            <person name="McCarron S."/>
            <person name="Jepson D."/>
            <person name="Richardson A."/>
            <person name="Raphael J."/>
            <person name="Moreira D."/>
            <person name="Taycher E."/>
            <person name="Zuo D."/>
            <person name="Mohr S."/>
            <person name="Kane M.F."/>
            <person name="Williamson J."/>
            <person name="Simpson A.J.G."/>
            <person name="Bulyk M.L."/>
            <person name="Harlow E."/>
            <person name="Marsischky G."/>
            <person name="Kolodner R.D."/>
            <person name="LaBaer J."/>
        </authorList>
    </citation>
    <scope>NUCLEOTIDE SEQUENCE [GENOMIC DNA]</scope>
    <source>
        <strain>ATCC 204508 / S288c</strain>
    </source>
</reference>
<reference key="4">
    <citation type="journal article" date="2007" name="Proc. Natl. Acad. Sci. U.S.A.">
        <title>High-density yeast-tiling array reveals previously undiscovered introns and extensive regulation of meiotic splicing.</title>
        <authorList>
            <person name="Juneau K."/>
            <person name="Palm C."/>
            <person name="Miranda M."/>
            <person name="Davis R.W."/>
        </authorList>
    </citation>
    <scope>NUCLEOTIDE SEQUENCE [MRNA] OF 1-47</scope>
    <source>
        <strain>ATCC 201390 / BY4743</strain>
    </source>
</reference>
<reference key="5">
    <citation type="journal article" date="1984" name="Mol. Gen. Genet.">
        <title>Yeast ribosomal proteins. VIII. Isolation of two proteins and sequence characterization of twenty-four proteins from cytoplasmic ribosomes.</title>
        <authorList>
            <person name="Otaka E."/>
            <person name="Higo K."/>
            <person name="Itoh T."/>
        </authorList>
    </citation>
    <scope>PROTEIN SEQUENCE OF 2-40</scope>
    <scope>CLEAVAGE OF INITIATOR METHIONINE</scope>
</reference>
<reference key="6">
    <citation type="journal article" date="1998" name="Yeast">
        <title>The list of cytoplasmic ribosomal proteins of Saccharomyces cerevisiae.</title>
        <authorList>
            <person name="Planta R.J."/>
            <person name="Mager W.H."/>
        </authorList>
    </citation>
    <scope>NOMENCLATURE</scope>
    <scope>SUBUNIT</scope>
</reference>
<reference key="7">
    <citation type="journal article" date="1999" name="J. Biol. Chem.">
        <title>The action of N-terminal acetyltransferases on yeast ribosomal proteins.</title>
        <authorList>
            <person name="Arnold R.J."/>
            <person name="Polevoda B."/>
            <person name="Reilly J.P."/>
            <person name="Sherman F."/>
        </authorList>
    </citation>
    <scope>CLEAVAGE OF INITIATOR METHIONINE</scope>
</reference>
<reference key="8">
    <citation type="journal article" date="2003" name="Nature">
        <title>Global analysis of protein localization in budding yeast.</title>
        <authorList>
            <person name="Huh W.-K."/>
            <person name="Falvo J.V."/>
            <person name="Gerke L.C."/>
            <person name="Carroll A.S."/>
            <person name="Howson R.W."/>
            <person name="Weissman J.S."/>
            <person name="O'Shea E.K."/>
        </authorList>
    </citation>
    <scope>SUBCELLULAR LOCATION [LARGE SCALE ANALYSIS]</scope>
</reference>
<reference key="9">
    <citation type="journal article" date="2003" name="Nature">
        <title>Global analysis of protein expression in yeast.</title>
        <authorList>
            <person name="Ghaemmaghami S."/>
            <person name="Huh W.-K."/>
            <person name="Bower K."/>
            <person name="Howson R.W."/>
            <person name="Belle A."/>
            <person name="Dephoure N."/>
            <person name="O'Shea E.K."/>
            <person name="Weissman J.S."/>
        </authorList>
    </citation>
    <scope>LEVEL OF PROTEIN EXPRESSION [LARGE SCALE ANALYSIS]</scope>
</reference>
<reference key="10">
    <citation type="journal article" date="2012" name="Proc. Natl. Acad. Sci. U.S.A.">
        <title>N-terminal acetylome analyses and functional insights of the N-terminal acetyltransferase NatB.</title>
        <authorList>
            <person name="Van Damme P."/>
            <person name="Lasa M."/>
            <person name="Polevoda B."/>
            <person name="Gazquez C."/>
            <person name="Elosegui-Artola A."/>
            <person name="Kim D.S."/>
            <person name="De Juan-Pardo E."/>
            <person name="Demeyer K."/>
            <person name="Hole K."/>
            <person name="Larrea E."/>
            <person name="Timmerman E."/>
            <person name="Prieto J."/>
            <person name="Arnesen T."/>
            <person name="Sherman F."/>
            <person name="Gevaert K."/>
            <person name="Aldabe R."/>
        </authorList>
    </citation>
    <scope>IDENTIFICATION BY MASS SPECTROMETRY [LARGE SCALE ANALYSIS]</scope>
</reference>
<reference key="11">
    <citation type="journal article" date="2012" name="Proteomics">
        <title>Sites of ubiquitin attachment in Saccharomyces cerevisiae.</title>
        <authorList>
            <person name="Starita L.M."/>
            <person name="Lo R.S."/>
            <person name="Eng J.K."/>
            <person name="von Haller P.D."/>
            <person name="Fields S."/>
        </authorList>
    </citation>
    <scope>UBIQUITINATION [LARGE SCALE ANALYSIS] AT LYS-52</scope>
    <scope>IDENTIFICATION BY MASS SPECTROMETRY [LARGE SCALE ANALYSIS]</scope>
</reference>
<reference key="12">
    <citation type="journal article" date="2014" name="Curr. Opin. Struct. Biol.">
        <title>A new system for naming ribosomal proteins.</title>
        <authorList>
            <person name="Ban N."/>
            <person name="Beckmann R."/>
            <person name="Cate J.H.D."/>
            <person name="Dinman J.D."/>
            <person name="Dragon F."/>
            <person name="Ellis S.R."/>
            <person name="Lafontaine D.L.J."/>
            <person name="Lindahl L."/>
            <person name="Liljas A."/>
            <person name="Lipton J.M."/>
            <person name="McAlear M.A."/>
            <person name="Moore P.B."/>
            <person name="Noller H.F."/>
            <person name="Ortega J."/>
            <person name="Panse V.G."/>
            <person name="Ramakrishnan V."/>
            <person name="Spahn C.M.T."/>
            <person name="Steitz T.A."/>
            <person name="Tchorzewski M."/>
            <person name="Tollervey D."/>
            <person name="Warren A.J."/>
            <person name="Williamson J.R."/>
            <person name="Wilson D."/>
            <person name="Yonath A."/>
            <person name="Yusupov M."/>
        </authorList>
    </citation>
    <scope>NOMENCLATURE</scope>
</reference>
<reference key="13">
    <citation type="journal article" date="2010" name="Science">
        <title>Crystal structure of the eukaryotic ribosome.</title>
        <authorList>
            <person name="Ben-Shem A."/>
            <person name="Jenner L."/>
            <person name="Yusupova G."/>
            <person name="Yusupov M."/>
        </authorList>
    </citation>
    <scope>X-RAY CRYSTALLOGRAPHY (4.0 ANGSTROMS) OF 80S RIBOSOME</scope>
</reference>
<reference key="14">
    <citation type="journal article" date="2011" name="Science">
        <title>The structure of the eukaryotic ribosome at 3.0 A resolution.</title>
        <authorList>
            <person name="Ben-Shem A."/>
            <person name="Garreau de Loubresse N."/>
            <person name="Melnikov S."/>
            <person name="Jenner L."/>
            <person name="Yusupova G."/>
            <person name="Yusupov M."/>
        </authorList>
    </citation>
    <scope>X-RAY CRYSTALLOGRAPHY (3.0 ANGSTROMS) OF 80S RIBOSOME</scope>
    <scope>SUBUNIT</scope>
    <scope>SUBCELLULAR LOCATION</scope>
</reference>
<accession>P05747</accession>
<accession>A2TBN8</accession>
<accession>D6VTR4</accession>
<dbReference type="EMBL" id="D50617">
    <property type="status" value="NOT_ANNOTATED_CDS"/>
    <property type="molecule type" value="Genomic_DNA"/>
</dbReference>
<dbReference type="EMBL" id="AY558472">
    <property type="protein sequence ID" value="AAS56798.1"/>
    <property type="molecule type" value="Genomic_DNA"/>
</dbReference>
<dbReference type="EMBL" id="EF123141">
    <property type="protein sequence ID" value="ABM97485.1"/>
    <property type="molecule type" value="mRNA"/>
</dbReference>
<dbReference type="EMBL" id="BK006940">
    <property type="protein sequence ID" value="DAA12474.1"/>
    <property type="molecule type" value="Genomic_DNA"/>
</dbReference>
<dbReference type="PIR" id="S71066">
    <property type="entry name" value="S71066"/>
</dbReference>
<dbReference type="RefSeq" id="NP_116690.3">
    <property type="nucleotide sequence ID" value="NM_001184311.3"/>
</dbReference>
<dbReference type="PDB" id="3J6X">
    <property type="method" value="EM"/>
    <property type="resolution" value="6.10 A"/>
    <property type="chains" value="69=1-59"/>
</dbReference>
<dbReference type="PDB" id="3J6Y">
    <property type="method" value="EM"/>
    <property type="resolution" value="6.10 A"/>
    <property type="chains" value="69=1-59"/>
</dbReference>
<dbReference type="PDB" id="3J77">
    <property type="method" value="EM"/>
    <property type="resolution" value="6.20 A"/>
    <property type="chains" value="79=1-59"/>
</dbReference>
<dbReference type="PDB" id="3J78">
    <property type="method" value="EM"/>
    <property type="resolution" value="6.30 A"/>
    <property type="chains" value="79=1-59"/>
</dbReference>
<dbReference type="PDB" id="4U3M">
    <property type="method" value="X-ray"/>
    <property type="resolution" value="3.00 A"/>
    <property type="chains" value="N9/n9=2-59"/>
</dbReference>
<dbReference type="PDB" id="4U3N">
    <property type="method" value="X-ray"/>
    <property type="resolution" value="3.20 A"/>
    <property type="chains" value="N9/n9=2-59"/>
</dbReference>
<dbReference type="PDB" id="4U3U">
    <property type="method" value="X-ray"/>
    <property type="resolution" value="2.90 A"/>
    <property type="chains" value="N9/n9=2-59"/>
</dbReference>
<dbReference type="PDB" id="4U4N">
    <property type="method" value="X-ray"/>
    <property type="resolution" value="3.10 A"/>
    <property type="chains" value="N9/n9=2-59"/>
</dbReference>
<dbReference type="PDB" id="4U4O">
    <property type="method" value="X-ray"/>
    <property type="resolution" value="3.60 A"/>
    <property type="chains" value="N9/n9=2-59"/>
</dbReference>
<dbReference type="PDB" id="4U4Q">
    <property type="method" value="X-ray"/>
    <property type="resolution" value="3.00 A"/>
    <property type="chains" value="N9/n9=2-59"/>
</dbReference>
<dbReference type="PDB" id="4U4R">
    <property type="method" value="X-ray"/>
    <property type="resolution" value="2.80 A"/>
    <property type="chains" value="N9/n9=2-59"/>
</dbReference>
<dbReference type="PDB" id="4U4U">
    <property type="method" value="X-ray"/>
    <property type="resolution" value="3.00 A"/>
    <property type="chains" value="N9/n9=2-59"/>
</dbReference>
<dbReference type="PDB" id="4U4Y">
    <property type="method" value="X-ray"/>
    <property type="resolution" value="3.20 A"/>
    <property type="chains" value="N9/n9=2-59"/>
</dbReference>
<dbReference type="PDB" id="4U4Z">
    <property type="method" value="X-ray"/>
    <property type="resolution" value="3.10 A"/>
    <property type="chains" value="N9/n9=2-59"/>
</dbReference>
<dbReference type="PDB" id="4U50">
    <property type="method" value="X-ray"/>
    <property type="resolution" value="3.20 A"/>
    <property type="chains" value="N9/n9=2-59"/>
</dbReference>
<dbReference type="PDB" id="4U51">
    <property type="method" value="X-ray"/>
    <property type="resolution" value="3.20 A"/>
    <property type="chains" value="N9/n9=2-59"/>
</dbReference>
<dbReference type="PDB" id="4U52">
    <property type="method" value="X-ray"/>
    <property type="resolution" value="3.00 A"/>
    <property type="chains" value="N9/n9=2-59"/>
</dbReference>
<dbReference type="PDB" id="4U53">
    <property type="method" value="X-ray"/>
    <property type="resolution" value="3.30 A"/>
    <property type="chains" value="N9/n9=2-59"/>
</dbReference>
<dbReference type="PDB" id="4U55">
    <property type="method" value="X-ray"/>
    <property type="resolution" value="3.20 A"/>
    <property type="chains" value="N9/n9=2-59"/>
</dbReference>
<dbReference type="PDB" id="4U56">
    <property type="method" value="X-ray"/>
    <property type="resolution" value="3.45 A"/>
    <property type="chains" value="N9/n9=2-59"/>
</dbReference>
<dbReference type="PDB" id="4U6F">
    <property type="method" value="X-ray"/>
    <property type="resolution" value="3.10 A"/>
    <property type="chains" value="N9/n9=2-59"/>
</dbReference>
<dbReference type="PDB" id="4V6I">
    <property type="method" value="EM"/>
    <property type="resolution" value="8.80 A"/>
    <property type="chains" value="Bd=1-59"/>
</dbReference>
<dbReference type="PDB" id="4V88">
    <property type="method" value="X-ray"/>
    <property type="resolution" value="3.00 A"/>
    <property type="chains" value="Bb/Db=1-59"/>
</dbReference>
<dbReference type="PDB" id="4V8T">
    <property type="method" value="EM"/>
    <property type="resolution" value="8.10 A"/>
    <property type="chains" value="b=1-59"/>
</dbReference>
<dbReference type="PDB" id="4V8Y">
    <property type="method" value="EM"/>
    <property type="resolution" value="4.30 A"/>
    <property type="chains" value="Bb=2-59"/>
</dbReference>
<dbReference type="PDB" id="4V8Z">
    <property type="method" value="EM"/>
    <property type="resolution" value="6.60 A"/>
    <property type="chains" value="Bb=2-59"/>
</dbReference>
<dbReference type="PDB" id="4V91">
    <property type="method" value="EM"/>
    <property type="resolution" value="3.70 A"/>
    <property type="chains" value="b=1-59"/>
</dbReference>
<dbReference type="PDB" id="5APN">
    <property type="method" value="EM"/>
    <property type="resolution" value="3.91 A"/>
    <property type="chains" value="b=1-59"/>
</dbReference>
<dbReference type="PDB" id="5APO">
    <property type="method" value="EM"/>
    <property type="resolution" value="3.41 A"/>
    <property type="chains" value="b=1-59"/>
</dbReference>
<dbReference type="PDB" id="5DAT">
    <property type="method" value="X-ray"/>
    <property type="resolution" value="3.15 A"/>
    <property type="chains" value="N9/n9=2-59"/>
</dbReference>
<dbReference type="PDB" id="5DC3">
    <property type="method" value="X-ray"/>
    <property type="resolution" value="3.25 A"/>
    <property type="chains" value="N9/n9=2-59"/>
</dbReference>
<dbReference type="PDB" id="5DGE">
    <property type="method" value="X-ray"/>
    <property type="resolution" value="3.45 A"/>
    <property type="chains" value="N9/n9=2-59"/>
</dbReference>
<dbReference type="PDB" id="5DGF">
    <property type="method" value="X-ray"/>
    <property type="resolution" value="3.30 A"/>
    <property type="chains" value="N9/n9=2-59"/>
</dbReference>
<dbReference type="PDB" id="5DGV">
    <property type="method" value="X-ray"/>
    <property type="resolution" value="3.10 A"/>
    <property type="chains" value="N9/n9=2-59"/>
</dbReference>
<dbReference type="PDB" id="5FCI">
    <property type="method" value="X-ray"/>
    <property type="resolution" value="3.40 A"/>
    <property type="chains" value="N9/n9=2-59"/>
</dbReference>
<dbReference type="PDB" id="5FCJ">
    <property type="method" value="X-ray"/>
    <property type="resolution" value="3.10 A"/>
    <property type="chains" value="N9/n9=2-59"/>
</dbReference>
<dbReference type="PDB" id="5GAK">
    <property type="method" value="EM"/>
    <property type="resolution" value="3.88 A"/>
    <property type="chains" value="d=1-59"/>
</dbReference>
<dbReference type="PDB" id="5H4P">
    <property type="method" value="EM"/>
    <property type="resolution" value="3.07 A"/>
    <property type="chains" value="b=1-59"/>
</dbReference>
<dbReference type="PDB" id="5I4L">
    <property type="method" value="X-ray"/>
    <property type="resolution" value="3.10 A"/>
    <property type="chains" value="N9/n9=2-59"/>
</dbReference>
<dbReference type="PDB" id="5JUO">
    <property type="method" value="EM"/>
    <property type="resolution" value="4.00 A"/>
    <property type="chains" value="GA=1-59"/>
</dbReference>
<dbReference type="PDB" id="5JUP">
    <property type="method" value="EM"/>
    <property type="resolution" value="3.50 A"/>
    <property type="chains" value="GA=1-59"/>
</dbReference>
<dbReference type="PDB" id="5JUS">
    <property type="method" value="EM"/>
    <property type="resolution" value="4.20 A"/>
    <property type="chains" value="GA=1-59"/>
</dbReference>
<dbReference type="PDB" id="5JUT">
    <property type="method" value="EM"/>
    <property type="resolution" value="4.00 A"/>
    <property type="chains" value="GA=1-59"/>
</dbReference>
<dbReference type="PDB" id="5JUU">
    <property type="method" value="EM"/>
    <property type="resolution" value="4.00 A"/>
    <property type="chains" value="GA=1-59"/>
</dbReference>
<dbReference type="PDB" id="5LYB">
    <property type="method" value="X-ray"/>
    <property type="resolution" value="3.25 A"/>
    <property type="chains" value="N9/n9=2-59"/>
</dbReference>
<dbReference type="PDB" id="5M1J">
    <property type="method" value="EM"/>
    <property type="resolution" value="3.30 A"/>
    <property type="chains" value="b5=2-59"/>
</dbReference>
<dbReference type="PDB" id="5MC6">
    <property type="method" value="EM"/>
    <property type="resolution" value="3.80 A"/>
    <property type="chains" value="AV=1-59"/>
</dbReference>
<dbReference type="PDB" id="5MEI">
    <property type="method" value="X-ray"/>
    <property type="resolution" value="3.50 A"/>
    <property type="chains" value="AC/DD=2-59"/>
</dbReference>
<dbReference type="PDB" id="5NDG">
    <property type="method" value="X-ray"/>
    <property type="resolution" value="3.70 A"/>
    <property type="chains" value="N9/n9=2-59"/>
</dbReference>
<dbReference type="PDB" id="5NDV">
    <property type="method" value="X-ray"/>
    <property type="resolution" value="3.30 A"/>
    <property type="chains" value="N9/n9=2-59"/>
</dbReference>
<dbReference type="PDB" id="5NDW">
    <property type="method" value="X-ray"/>
    <property type="resolution" value="3.70 A"/>
    <property type="chains" value="N9/n9=2-59"/>
</dbReference>
<dbReference type="PDB" id="5OBM">
    <property type="method" value="X-ray"/>
    <property type="resolution" value="3.40 A"/>
    <property type="chains" value="N9/n9=2-59"/>
</dbReference>
<dbReference type="PDB" id="5ON6">
    <property type="method" value="X-ray"/>
    <property type="resolution" value="3.10 A"/>
    <property type="chains" value="AC/DD=2-59"/>
</dbReference>
<dbReference type="PDB" id="5T62">
    <property type="method" value="EM"/>
    <property type="resolution" value="3.30 A"/>
    <property type="chains" value="o=1-59"/>
</dbReference>
<dbReference type="PDB" id="5T6R">
    <property type="method" value="EM"/>
    <property type="resolution" value="4.50 A"/>
    <property type="chains" value="o=1-59"/>
</dbReference>
<dbReference type="PDB" id="5TBW">
    <property type="method" value="X-ray"/>
    <property type="resolution" value="3.00 A"/>
    <property type="chains" value="AC/DD=2-59"/>
</dbReference>
<dbReference type="PDB" id="5TGA">
    <property type="method" value="X-ray"/>
    <property type="resolution" value="3.30 A"/>
    <property type="chains" value="N9/n9=2-59"/>
</dbReference>
<dbReference type="PDB" id="5TGM">
    <property type="method" value="X-ray"/>
    <property type="resolution" value="3.50 A"/>
    <property type="chains" value="N9/n9=2-59"/>
</dbReference>
<dbReference type="PDB" id="6GQ1">
    <property type="method" value="EM"/>
    <property type="resolution" value="4.40 A"/>
    <property type="chains" value="b=2-59"/>
</dbReference>
<dbReference type="PDB" id="6GQB">
    <property type="method" value="EM"/>
    <property type="resolution" value="3.90 A"/>
    <property type="chains" value="b=2-59"/>
</dbReference>
<dbReference type="PDB" id="6GQV">
    <property type="method" value="EM"/>
    <property type="resolution" value="4.00 A"/>
    <property type="chains" value="b=2-59"/>
</dbReference>
<dbReference type="PDB" id="6HD7">
    <property type="method" value="EM"/>
    <property type="resolution" value="3.40 A"/>
    <property type="chains" value="d=1-59"/>
</dbReference>
<dbReference type="PDB" id="6HHQ">
    <property type="method" value="X-ray"/>
    <property type="resolution" value="3.10 A"/>
    <property type="chains" value="AC/DD=1-59"/>
</dbReference>
<dbReference type="PDB" id="6I7O">
    <property type="method" value="EM"/>
    <property type="resolution" value="5.30 A"/>
    <property type="chains" value="AV/XV=2-59"/>
</dbReference>
<dbReference type="PDB" id="6N8J">
    <property type="method" value="EM"/>
    <property type="resolution" value="3.50 A"/>
    <property type="chains" value="o=1-59"/>
</dbReference>
<dbReference type="PDB" id="6N8K">
    <property type="method" value="EM"/>
    <property type="resolution" value="3.60 A"/>
    <property type="chains" value="o=1-59"/>
</dbReference>
<dbReference type="PDB" id="6N8L">
    <property type="method" value="EM"/>
    <property type="resolution" value="3.60 A"/>
    <property type="chains" value="o=1-59"/>
</dbReference>
<dbReference type="PDB" id="6N8M">
    <property type="method" value="EM"/>
    <property type="resolution" value="3.50 A"/>
    <property type="chains" value="o=1-59"/>
</dbReference>
<dbReference type="PDB" id="6N8N">
    <property type="method" value="EM"/>
    <property type="resolution" value="3.80 A"/>
    <property type="chains" value="o=1-59"/>
</dbReference>
<dbReference type="PDB" id="6N8O">
    <property type="method" value="EM"/>
    <property type="resolution" value="3.50 A"/>
    <property type="chains" value="o=1-59"/>
</dbReference>
<dbReference type="PDB" id="6OIG">
    <property type="method" value="EM"/>
    <property type="resolution" value="3.80 A"/>
    <property type="chains" value="b=2-59"/>
</dbReference>
<dbReference type="PDB" id="6Q8Y">
    <property type="method" value="EM"/>
    <property type="resolution" value="3.10 A"/>
    <property type="chains" value="AV=2-59"/>
</dbReference>
<dbReference type="PDB" id="6QIK">
    <property type="method" value="EM"/>
    <property type="resolution" value="3.10 A"/>
    <property type="chains" value="a=1-59"/>
</dbReference>
<dbReference type="PDB" id="6QT0">
    <property type="method" value="EM"/>
    <property type="resolution" value="3.40 A"/>
    <property type="chains" value="a=1-59"/>
</dbReference>
<dbReference type="PDB" id="6QTZ">
    <property type="method" value="EM"/>
    <property type="resolution" value="3.50 A"/>
    <property type="chains" value="a=1-59"/>
</dbReference>
<dbReference type="PDB" id="6R84">
    <property type="method" value="EM"/>
    <property type="resolution" value="3.60 A"/>
    <property type="chains" value="d=2-59"/>
</dbReference>
<dbReference type="PDB" id="6R86">
    <property type="method" value="EM"/>
    <property type="resolution" value="3.40 A"/>
    <property type="chains" value="d=2-59"/>
</dbReference>
<dbReference type="PDB" id="6R87">
    <property type="method" value="EM"/>
    <property type="resolution" value="3.40 A"/>
    <property type="chains" value="d=2-59"/>
</dbReference>
<dbReference type="PDB" id="6RI5">
    <property type="method" value="EM"/>
    <property type="resolution" value="3.30 A"/>
    <property type="chains" value="a=1-59"/>
</dbReference>
<dbReference type="PDB" id="6RZZ">
    <property type="method" value="EM"/>
    <property type="resolution" value="3.20 A"/>
    <property type="chains" value="a=1-59"/>
</dbReference>
<dbReference type="PDB" id="6S05">
    <property type="method" value="EM"/>
    <property type="resolution" value="3.90 A"/>
    <property type="chains" value="a=1-59"/>
</dbReference>
<dbReference type="PDB" id="6S47">
    <property type="method" value="EM"/>
    <property type="resolution" value="3.28 A"/>
    <property type="chains" value="Ad=2-59"/>
</dbReference>
<dbReference type="PDB" id="6SNT">
    <property type="method" value="EM"/>
    <property type="resolution" value="2.80 A"/>
    <property type="chains" value="ao=1-59"/>
</dbReference>
<dbReference type="PDB" id="6SV4">
    <property type="method" value="EM"/>
    <property type="resolution" value="3.30 A"/>
    <property type="chains" value="AV/XV/zV=1-59"/>
</dbReference>
<dbReference type="PDB" id="6T4Q">
    <property type="method" value="EM"/>
    <property type="resolution" value="2.60 A"/>
    <property type="chains" value="Lb=2-59"/>
</dbReference>
<dbReference type="PDB" id="6T7I">
    <property type="method" value="EM"/>
    <property type="resolution" value="3.20 A"/>
    <property type="chains" value="Lb=1-59"/>
</dbReference>
<dbReference type="PDB" id="6T7T">
    <property type="method" value="EM"/>
    <property type="resolution" value="3.10 A"/>
    <property type="chains" value="Lb=1-59"/>
</dbReference>
<dbReference type="PDB" id="6T83">
    <property type="method" value="EM"/>
    <property type="resolution" value="4.00 A"/>
    <property type="chains" value="M/by=1-59"/>
</dbReference>
<dbReference type="PDB" id="6TB3">
    <property type="method" value="EM"/>
    <property type="resolution" value="2.80 A"/>
    <property type="chains" value="AV=2-59"/>
</dbReference>
<dbReference type="PDB" id="6TNU">
    <property type="method" value="EM"/>
    <property type="resolution" value="3.10 A"/>
    <property type="chains" value="AV=2-59"/>
</dbReference>
<dbReference type="PDB" id="6WOO">
    <property type="method" value="EM"/>
    <property type="resolution" value="2.90 A"/>
    <property type="chains" value="b=3-59"/>
</dbReference>
<dbReference type="PDB" id="6Z6J">
    <property type="method" value="EM"/>
    <property type="resolution" value="3.40 A"/>
    <property type="chains" value="Lb=1-59"/>
</dbReference>
<dbReference type="PDB" id="6Z6K">
    <property type="method" value="EM"/>
    <property type="resolution" value="3.40 A"/>
    <property type="chains" value="Lb=1-59"/>
</dbReference>
<dbReference type="PDB" id="7AZY">
    <property type="method" value="EM"/>
    <property type="resolution" value="2.88 A"/>
    <property type="chains" value="W=1-59"/>
</dbReference>
<dbReference type="PDB" id="7B7D">
    <property type="method" value="EM"/>
    <property type="resolution" value="3.30 A"/>
    <property type="chains" value="LX=2-59"/>
</dbReference>
<dbReference type="PDB" id="7MPI">
    <property type="method" value="EM"/>
    <property type="resolution" value="3.05 A"/>
    <property type="chains" value="Ab=2-59"/>
</dbReference>
<dbReference type="PDB" id="7MPJ">
    <property type="method" value="EM"/>
    <property type="resolution" value="2.70 A"/>
    <property type="chains" value="Ab=2-59"/>
</dbReference>
<dbReference type="PDB" id="7N8B">
    <property type="method" value="EM"/>
    <property type="resolution" value="3.05 A"/>
    <property type="chains" value="Ab=2-59"/>
</dbReference>
<dbReference type="PDB" id="7NRC">
    <property type="method" value="EM"/>
    <property type="resolution" value="3.90 A"/>
    <property type="chains" value="Ld=2-59"/>
</dbReference>
<dbReference type="PDB" id="7NRD">
    <property type="method" value="EM"/>
    <property type="resolution" value="4.36 A"/>
    <property type="chains" value="Ld=2-59"/>
</dbReference>
<dbReference type="PDB" id="7Z34">
    <property type="method" value="EM"/>
    <property type="resolution" value="3.80 A"/>
    <property type="chains" value="o=1-59"/>
</dbReference>
<dbReference type="PDB" id="7ZPQ">
    <property type="method" value="EM"/>
    <property type="resolution" value="3.47 A"/>
    <property type="chains" value="Ba=2-59"/>
</dbReference>
<dbReference type="PDB" id="7ZRS">
    <property type="method" value="EM"/>
    <property type="resolution" value="4.80 A"/>
    <property type="chains" value="Ba=2-59"/>
</dbReference>
<dbReference type="PDB" id="7ZS5">
    <property type="method" value="EM"/>
    <property type="resolution" value="3.20 A"/>
    <property type="chains" value="Bc=2-59"/>
</dbReference>
<dbReference type="PDB" id="7ZUW">
    <property type="method" value="EM"/>
    <property type="resolution" value="4.30 A"/>
    <property type="chains" value="Ba=2-59"/>
</dbReference>
<dbReference type="PDB" id="7ZUX">
    <property type="method" value="EM"/>
    <property type="resolution" value="2.50 A"/>
    <property type="chains" value="Ea=2-59"/>
</dbReference>
<dbReference type="PDB" id="7ZW0">
    <property type="method" value="EM"/>
    <property type="resolution" value="2.40 A"/>
    <property type="chains" value="Le=1-59"/>
</dbReference>
<dbReference type="PDB" id="8AAF">
    <property type="method" value="EM"/>
    <property type="resolution" value="2.50 A"/>
    <property type="chains" value="O=1-59"/>
</dbReference>
<dbReference type="PDB" id="8AGT">
    <property type="method" value="EM"/>
    <property type="resolution" value="2.60 A"/>
    <property type="chains" value="O=1-59"/>
</dbReference>
<dbReference type="PDB" id="8AGU">
    <property type="method" value="EM"/>
    <property type="resolution" value="2.70 A"/>
    <property type="chains" value="O=1-59"/>
</dbReference>
<dbReference type="PDB" id="8AGV">
    <property type="method" value="EM"/>
    <property type="resolution" value="2.60 A"/>
    <property type="chains" value="O=1-59"/>
</dbReference>
<dbReference type="PDB" id="8AGW">
    <property type="method" value="EM"/>
    <property type="resolution" value="2.60 A"/>
    <property type="chains" value="O=1-59"/>
</dbReference>
<dbReference type="PDB" id="8AGX">
    <property type="method" value="EM"/>
    <property type="resolution" value="2.40 A"/>
    <property type="chains" value="O=1-59"/>
</dbReference>
<dbReference type="PDB" id="8AGZ">
    <property type="method" value="EM"/>
    <property type="resolution" value="2.60 A"/>
    <property type="chains" value="O=1-59"/>
</dbReference>
<dbReference type="PDB" id="8BIP">
    <property type="method" value="EM"/>
    <property type="resolution" value="3.10 A"/>
    <property type="chains" value="Lb=2-59"/>
</dbReference>
<dbReference type="PDB" id="8BJQ">
    <property type="method" value="EM"/>
    <property type="resolution" value="3.80 A"/>
    <property type="chains" value="Lb=2-59"/>
</dbReference>
<dbReference type="PDB" id="8BN3">
    <property type="method" value="EM"/>
    <property type="resolution" value="2.40 A"/>
    <property type="chains" value="N9=2-57"/>
</dbReference>
<dbReference type="PDB" id="8BQD">
    <property type="method" value="EM"/>
    <property type="resolution" value="3.90 A"/>
    <property type="chains" value="AV=2-59"/>
</dbReference>
<dbReference type="PDB" id="8BQX">
    <property type="method" value="EM"/>
    <property type="resolution" value="3.80 A"/>
    <property type="chains" value="AV=2-59"/>
</dbReference>
<dbReference type="PDB" id="8CCS">
    <property type="method" value="EM"/>
    <property type="resolution" value="1.97 A"/>
    <property type="chains" value="N=1-59"/>
</dbReference>
<dbReference type="PDB" id="8CDL">
    <property type="method" value="EM"/>
    <property type="resolution" value="2.72 A"/>
    <property type="chains" value="N=1-59"/>
</dbReference>
<dbReference type="PDB" id="8CDR">
    <property type="method" value="EM"/>
    <property type="resolution" value="2.04 A"/>
    <property type="chains" value="N=1-59"/>
</dbReference>
<dbReference type="PDB" id="8CEH">
    <property type="method" value="EM"/>
    <property type="resolution" value="2.05 A"/>
    <property type="chains" value="N=1-59"/>
</dbReference>
<dbReference type="PDB" id="8CF5">
    <property type="method" value="EM"/>
    <property type="resolution" value="2.71 A"/>
    <property type="chains" value="N=1-59"/>
</dbReference>
<dbReference type="PDB" id="8CG8">
    <property type="method" value="EM"/>
    <property type="resolution" value="2.57 A"/>
    <property type="chains" value="N=1-59"/>
</dbReference>
<dbReference type="PDB" id="8CGN">
    <property type="method" value="EM"/>
    <property type="resolution" value="2.28 A"/>
    <property type="chains" value="N=1-59"/>
</dbReference>
<dbReference type="PDB" id="8CIV">
    <property type="method" value="EM"/>
    <property type="resolution" value="2.47 A"/>
    <property type="chains" value="N=1-59"/>
</dbReference>
<dbReference type="PDB" id="8CKU">
    <property type="method" value="EM"/>
    <property type="resolution" value="3.11 A"/>
    <property type="chains" value="N=1-59"/>
</dbReference>
<dbReference type="PDB" id="8CMJ">
    <property type="method" value="EM"/>
    <property type="resolution" value="3.79 A"/>
    <property type="chains" value="N=1-59"/>
</dbReference>
<dbReference type="PDB" id="8HFR">
    <property type="method" value="EM"/>
    <property type="resolution" value="2.64 A"/>
    <property type="chains" value="b3=1-59"/>
</dbReference>
<dbReference type="PDB" id="8K2D">
    <property type="method" value="EM"/>
    <property type="resolution" value="3.20 A"/>
    <property type="chains" value="Lb=1-59"/>
</dbReference>
<dbReference type="PDB" id="8K82">
    <property type="method" value="EM"/>
    <property type="resolution" value="3.00 A"/>
    <property type="chains" value="Lb=1-59"/>
</dbReference>
<dbReference type="PDB" id="8P4V">
    <property type="method" value="X-ray"/>
    <property type="resolution" value="3.16 A"/>
    <property type="chains" value="AC/DD=1-59"/>
</dbReference>
<dbReference type="PDB" id="8P8M">
    <property type="method" value="EM"/>
    <property type="resolution" value="2.66 A"/>
    <property type="chains" value="RB=1-59"/>
</dbReference>
<dbReference type="PDB" id="8P8N">
    <property type="method" value="EM"/>
    <property type="resolution" value="2.15 A"/>
    <property type="chains" value="RB=1-59"/>
</dbReference>
<dbReference type="PDB" id="8P8U">
    <property type="method" value="EM"/>
    <property type="resolution" value="2.23 A"/>
    <property type="chains" value="RB=1-59"/>
</dbReference>
<dbReference type="PDB" id="8P9A">
    <property type="method" value="X-ray"/>
    <property type="resolution" value="2.90 A"/>
    <property type="chains" value="AC/DD=1-59"/>
</dbReference>
<dbReference type="PDB" id="8PFR">
    <property type="method" value="EM"/>
    <property type="resolution" value="2.15 A"/>
    <property type="chains" value="RB=1-59"/>
</dbReference>
<dbReference type="PDB" id="8T2X">
    <property type="method" value="EM"/>
    <property type="resolution" value="2.46 A"/>
    <property type="chains" value="Ab=1-59"/>
</dbReference>
<dbReference type="PDB" id="8T2Y">
    <property type="method" value="EM"/>
    <property type="resolution" value="2.20 A"/>
    <property type="chains" value="Ab=1-59"/>
</dbReference>
<dbReference type="PDB" id="8T2Z">
    <property type="method" value="EM"/>
    <property type="resolution" value="2.40 A"/>
    <property type="chains" value="Ab=1-59"/>
</dbReference>
<dbReference type="PDB" id="8T30">
    <property type="method" value="EM"/>
    <property type="resolution" value="2.88 A"/>
    <property type="chains" value="Ab=1-59"/>
</dbReference>
<dbReference type="PDB" id="8T3A">
    <property type="method" value="EM"/>
    <property type="resolution" value="2.86 A"/>
    <property type="chains" value="Ab=1-59"/>
</dbReference>
<dbReference type="PDB" id="8T3B">
    <property type="method" value="EM"/>
    <property type="resolution" value="3.08 A"/>
    <property type="chains" value="Ab=1-59"/>
</dbReference>
<dbReference type="PDB" id="8T3C">
    <property type="method" value="EM"/>
    <property type="resolution" value="3.86 A"/>
    <property type="chains" value="Ab=1-59"/>
</dbReference>
<dbReference type="PDB" id="8T3D">
    <property type="method" value="EM"/>
    <property type="resolution" value="2.95 A"/>
    <property type="chains" value="Ab=1-59"/>
</dbReference>
<dbReference type="PDB" id="8T3E">
    <property type="method" value="EM"/>
    <property type="resolution" value="3.04 A"/>
    <property type="chains" value="Ab=1-59"/>
</dbReference>
<dbReference type="PDB" id="8T3F">
    <property type="method" value="EM"/>
    <property type="resolution" value="3.09 A"/>
    <property type="chains" value="Ab=1-59"/>
</dbReference>
<dbReference type="PDB" id="8UT0">
    <property type="method" value="EM"/>
    <property type="resolution" value="3.22 A"/>
    <property type="chains" value="Ld=2-59"/>
</dbReference>
<dbReference type="PDB" id="8UTI">
    <property type="method" value="EM"/>
    <property type="resolution" value="3.13 A"/>
    <property type="chains" value="Ld=2-59"/>
</dbReference>
<dbReference type="PDB" id="8XU8">
    <property type="method" value="EM"/>
    <property type="resolution" value="3.40 A"/>
    <property type="chains" value="d=2-59"/>
</dbReference>
<dbReference type="PDB" id="8Y0U">
    <property type="method" value="EM"/>
    <property type="resolution" value="3.59 A"/>
    <property type="chains" value="Lb=1-59"/>
</dbReference>
<dbReference type="PDB" id="8YLD">
    <property type="method" value="EM"/>
    <property type="resolution" value="3.90 A"/>
    <property type="chains" value="d=2-59"/>
</dbReference>
<dbReference type="PDB" id="8YLR">
    <property type="method" value="EM"/>
    <property type="resolution" value="3.90 A"/>
    <property type="chains" value="d=2-59"/>
</dbReference>
<dbReference type="PDB" id="8Z70">
    <property type="method" value="EM"/>
    <property type="resolution" value="3.20 A"/>
    <property type="chains" value="d=2-59"/>
</dbReference>
<dbReference type="PDB" id="8Z71">
    <property type="method" value="EM"/>
    <property type="resolution" value="3.60 A"/>
    <property type="chains" value="d=2-59"/>
</dbReference>
<dbReference type="PDB" id="9F9S">
    <property type="method" value="EM"/>
    <property type="resolution" value="2.90 A"/>
    <property type="chains" value="Lp/Mp=1-59"/>
</dbReference>
<dbReference type="PDBsum" id="3J6X"/>
<dbReference type="PDBsum" id="3J6Y"/>
<dbReference type="PDBsum" id="3J77"/>
<dbReference type="PDBsum" id="3J78"/>
<dbReference type="PDBsum" id="4U3M"/>
<dbReference type="PDBsum" id="4U3N"/>
<dbReference type="PDBsum" id="4U3U"/>
<dbReference type="PDBsum" id="4U4N"/>
<dbReference type="PDBsum" id="4U4O"/>
<dbReference type="PDBsum" id="4U4Q"/>
<dbReference type="PDBsum" id="4U4R"/>
<dbReference type="PDBsum" id="4U4U"/>
<dbReference type="PDBsum" id="4U4Y"/>
<dbReference type="PDBsum" id="4U4Z"/>
<dbReference type="PDBsum" id="4U50"/>
<dbReference type="PDBsum" id="4U51"/>
<dbReference type="PDBsum" id="4U52"/>
<dbReference type="PDBsum" id="4U53"/>
<dbReference type="PDBsum" id="4U55"/>
<dbReference type="PDBsum" id="4U56"/>
<dbReference type="PDBsum" id="4U6F"/>
<dbReference type="PDBsum" id="4V6I"/>
<dbReference type="PDBsum" id="4V88"/>
<dbReference type="PDBsum" id="4V8T"/>
<dbReference type="PDBsum" id="4V8Y"/>
<dbReference type="PDBsum" id="4V8Z"/>
<dbReference type="PDBsum" id="4V91"/>
<dbReference type="PDBsum" id="5APN"/>
<dbReference type="PDBsum" id="5APO"/>
<dbReference type="PDBsum" id="5DAT"/>
<dbReference type="PDBsum" id="5DC3"/>
<dbReference type="PDBsum" id="5DGE"/>
<dbReference type="PDBsum" id="5DGF"/>
<dbReference type="PDBsum" id="5DGV"/>
<dbReference type="PDBsum" id="5FCI"/>
<dbReference type="PDBsum" id="5FCJ"/>
<dbReference type="PDBsum" id="5GAK"/>
<dbReference type="PDBsum" id="5H4P"/>
<dbReference type="PDBsum" id="5I4L"/>
<dbReference type="PDBsum" id="5JUO"/>
<dbReference type="PDBsum" id="5JUP"/>
<dbReference type="PDBsum" id="5JUS"/>
<dbReference type="PDBsum" id="5JUT"/>
<dbReference type="PDBsum" id="5JUU"/>
<dbReference type="PDBsum" id="5LYB"/>
<dbReference type="PDBsum" id="5M1J"/>
<dbReference type="PDBsum" id="5MC6"/>
<dbReference type="PDBsum" id="5MEI"/>
<dbReference type="PDBsum" id="5NDG"/>
<dbReference type="PDBsum" id="5NDV"/>
<dbReference type="PDBsum" id="5NDW"/>
<dbReference type="PDBsum" id="5OBM"/>
<dbReference type="PDBsum" id="5ON6"/>
<dbReference type="PDBsum" id="5T62"/>
<dbReference type="PDBsum" id="5T6R"/>
<dbReference type="PDBsum" id="5TBW"/>
<dbReference type="PDBsum" id="5TGA"/>
<dbReference type="PDBsum" id="5TGM"/>
<dbReference type="PDBsum" id="6GQ1"/>
<dbReference type="PDBsum" id="6GQB"/>
<dbReference type="PDBsum" id="6GQV"/>
<dbReference type="PDBsum" id="6HD7"/>
<dbReference type="PDBsum" id="6HHQ"/>
<dbReference type="PDBsum" id="6I7O"/>
<dbReference type="PDBsum" id="6N8J"/>
<dbReference type="PDBsum" id="6N8K"/>
<dbReference type="PDBsum" id="6N8L"/>
<dbReference type="PDBsum" id="6N8M"/>
<dbReference type="PDBsum" id="6N8N"/>
<dbReference type="PDBsum" id="6N8O"/>
<dbReference type="PDBsum" id="6OIG"/>
<dbReference type="PDBsum" id="6Q8Y"/>
<dbReference type="PDBsum" id="6QIK"/>
<dbReference type="PDBsum" id="6QT0"/>
<dbReference type="PDBsum" id="6QTZ"/>
<dbReference type="PDBsum" id="6R84"/>
<dbReference type="PDBsum" id="6R86"/>
<dbReference type="PDBsum" id="6R87"/>
<dbReference type="PDBsum" id="6RI5"/>
<dbReference type="PDBsum" id="6RZZ"/>
<dbReference type="PDBsum" id="6S05"/>
<dbReference type="PDBsum" id="6S47"/>
<dbReference type="PDBsum" id="6SNT"/>
<dbReference type="PDBsum" id="6SV4"/>
<dbReference type="PDBsum" id="6T4Q"/>
<dbReference type="PDBsum" id="6T7I"/>
<dbReference type="PDBsum" id="6T7T"/>
<dbReference type="PDBsum" id="6T83"/>
<dbReference type="PDBsum" id="6TB3"/>
<dbReference type="PDBsum" id="6TNU"/>
<dbReference type="PDBsum" id="6WOO"/>
<dbReference type="PDBsum" id="6Z6J"/>
<dbReference type="PDBsum" id="6Z6K"/>
<dbReference type="PDBsum" id="7AZY"/>
<dbReference type="PDBsum" id="7B7D"/>
<dbReference type="PDBsum" id="7MPI"/>
<dbReference type="PDBsum" id="7MPJ"/>
<dbReference type="PDBsum" id="7N8B"/>
<dbReference type="PDBsum" id="7NRC"/>
<dbReference type="PDBsum" id="7NRD"/>
<dbReference type="PDBsum" id="7Z34"/>
<dbReference type="PDBsum" id="7ZPQ"/>
<dbReference type="PDBsum" id="7ZRS"/>
<dbReference type="PDBsum" id="7ZS5"/>
<dbReference type="PDBsum" id="7ZUW"/>
<dbReference type="PDBsum" id="7ZUX"/>
<dbReference type="PDBsum" id="7ZW0"/>
<dbReference type="PDBsum" id="8AAF"/>
<dbReference type="PDBsum" id="8AGT"/>
<dbReference type="PDBsum" id="8AGU"/>
<dbReference type="PDBsum" id="8AGV"/>
<dbReference type="PDBsum" id="8AGW"/>
<dbReference type="PDBsum" id="8AGX"/>
<dbReference type="PDBsum" id="8AGZ"/>
<dbReference type="PDBsum" id="8BIP"/>
<dbReference type="PDBsum" id="8BJQ"/>
<dbReference type="PDBsum" id="8BN3"/>
<dbReference type="PDBsum" id="8BQD"/>
<dbReference type="PDBsum" id="8BQX"/>
<dbReference type="PDBsum" id="8CCS"/>
<dbReference type="PDBsum" id="8CDL"/>
<dbReference type="PDBsum" id="8CDR"/>
<dbReference type="PDBsum" id="8CEH"/>
<dbReference type="PDBsum" id="8CF5"/>
<dbReference type="PDBsum" id="8CG8"/>
<dbReference type="PDBsum" id="8CGN"/>
<dbReference type="PDBsum" id="8CIV"/>
<dbReference type="PDBsum" id="8CKU"/>
<dbReference type="PDBsum" id="8CMJ"/>
<dbReference type="PDBsum" id="8HFR"/>
<dbReference type="PDBsum" id="8K2D"/>
<dbReference type="PDBsum" id="8K82"/>
<dbReference type="PDBsum" id="8P4V"/>
<dbReference type="PDBsum" id="8P8M"/>
<dbReference type="PDBsum" id="8P8N"/>
<dbReference type="PDBsum" id="8P8U"/>
<dbReference type="PDBsum" id="8P9A"/>
<dbReference type="PDBsum" id="8PFR"/>
<dbReference type="PDBsum" id="8T2X"/>
<dbReference type="PDBsum" id="8T2Y"/>
<dbReference type="PDBsum" id="8T2Z"/>
<dbReference type="PDBsum" id="8T30"/>
<dbReference type="PDBsum" id="8T3A"/>
<dbReference type="PDBsum" id="8T3B"/>
<dbReference type="PDBsum" id="8T3C"/>
<dbReference type="PDBsum" id="8T3D"/>
<dbReference type="PDBsum" id="8T3E"/>
<dbReference type="PDBsum" id="8T3F"/>
<dbReference type="PDBsum" id="8UT0"/>
<dbReference type="PDBsum" id="8UTI"/>
<dbReference type="PDBsum" id="8XU8"/>
<dbReference type="PDBsum" id="8Y0U"/>
<dbReference type="PDBsum" id="8YLD"/>
<dbReference type="PDBsum" id="8YLR"/>
<dbReference type="PDBsum" id="8Z70"/>
<dbReference type="PDBsum" id="8Z71"/>
<dbReference type="PDBsum" id="9F9S"/>
<dbReference type="EMDB" id="EMD-0369"/>
<dbReference type="EMDB" id="EMD-0370"/>
<dbReference type="EMDB" id="EMD-0371"/>
<dbReference type="EMDB" id="EMD-0372"/>
<dbReference type="EMDB" id="EMD-0373"/>
<dbReference type="EMDB" id="EMD-10068"/>
<dbReference type="EMDB" id="EMD-10071"/>
<dbReference type="EMDB" id="EMD-10315"/>
<dbReference type="EMDB" id="EMD-10377"/>
<dbReference type="EMDB" id="EMD-10396"/>
<dbReference type="EMDB" id="EMD-10397"/>
<dbReference type="EMDB" id="EMD-10398"/>
<dbReference type="EMDB" id="EMD-10431"/>
<dbReference type="EMDB" id="EMD-10537"/>
<dbReference type="EMDB" id="EMD-11096"/>
<dbReference type="EMDB" id="EMD-11097"/>
<dbReference type="EMDB" id="EMD-11951"/>
<dbReference type="EMDB" id="EMD-14471"/>
<dbReference type="EMDB" id="EMD-14926"/>
<dbReference type="EMDB" id="EMD-14979"/>
<dbReference type="EMDB" id="EMD-14990"/>
<dbReference type="EMDB" id="EMD-15423"/>
<dbReference type="EMDB" id="EMD-15427"/>
<dbReference type="EMDB" id="EMD-16086"/>
<dbReference type="EMDB" id="EMD-16090"/>
<dbReference type="EMDB" id="EMD-16563"/>
<dbReference type="EMDB" id="EMD-16591"/>
<dbReference type="EMDB" id="EMD-16594"/>
<dbReference type="EMDB" id="EMD-16609"/>
<dbReference type="EMDB" id="EMD-16616"/>
<dbReference type="EMDB" id="EMD-16634"/>
<dbReference type="EMDB" id="EMD-16648"/>
<dbReference type="EMDB" id="EMD-16684"/>
<dbReference type="EMDB" id="EMD-16702"/>
<dbReference type="EMDB" id="EMD-16729"/>
<dbReference type="EMDB" id="EMD-17549"/>
<dbReference type="EMDB" id="EMD-17550"/>
<dbReference type="EMDB" id="EMD-17552"/>
<dbReference type="EMDB" id="EMD-17653"/>
<dbReference type="EMDB" id="EMD-20077"/>
<dbReference type="EMDB" id="EMD-21859"/>
<dbReference type="EMDB" id="EMD-23934"/>
<dbReference type="EMDB" id="EMD-23935"/>
<dbReference type="EMDB" id="EMD-24235"/>
<dbReference type="EMDB" id="EMD-34725"/>
<dbReference type="EMDB" id="EMD-36839"/>
<dbReference type="EMDB" id="EMD-36945"/>
<dbReference type="EMDB" id="EMD-38660"/>
<dbReference type="EMDB" id="EMD-4140"/>
<dbReference type="EMDB" id="EMD-42525"/>
<dbReference type="EMDB" id="EMD-42540"/>
<dbReference type="EMDB" id="EMD-4427"/>
<dbReference type="EMDB" id="EMD-4474"/>
<dbReference type="EMDB" id="EMD-4560"/>
<dbReference type="EMDB" id="EMD-4630"/>
<dbReference type="EMDB" id="EMD-4636"/>
<dbReference type="EMDB" id="EMD-4751"/>
<dbReference type="EMDB" id="EMD-4752"/>
<dbReference type="EMDB" id="EMD-4753"/>
<dbReference type="EMDB" id="EMD-4884"/>
<dbReference type="EMDB" id="EMD-50259"/>
<dbReference type="EMDB" id="EMD-8362"/>
<dbReference type="EMDB" id="EMD-8368"/>
<dbReference type="SMR" id="P05747"/>
<dbReference type="BioGRID" id="31189">
    <property type="interactions" value="265"/>
</dbReference>
<dbReference type="ComplexPortal" id="CPX-1601">
    <property type="entry name" value="60S cytosolic large ribosomal subunit"/>
</dbReference>
<dbReference type="FunCoup" id="P05747">
    <property type="interactions" value="780"/>
</dbReference>
<dbReference type="IntAct" id="P05747">
    <property type="interactions" value="50"/>
</dbReference>
<dbReference type="STRING" id="4932.YFR032C-A"/>
<dbReference type="iPTMnet" id="P05747"/>
<dbReference type="PaxDb" id="4932-YFR032C-A"/>
<dbReference type="PeptideAtlas" id="P05747"/>
<dbReference type="EnsemblFungi" id="YFR032C-A_mRNA">
    <property type="protein sequence ID" value="YFR032C-A"/>
    <property type="gene ID" value="YFR032C-A"/>
</dbReference>
<dbReference type="GeneID" id="850592"/>
<dbReference type="KEGG" id="sce:YFR032C-A"/>
<dbReference type="AGR" id="SGD:S000006437"/>
<dbReference type="SGD" id="S000006437">
    <property type="gene designation" value="RPL29"/>
</dbReference>
<dbReference type="VEuPathDB" id="FungiDB:YFR032C-A"/>
<dbReference type="eggNOG" id="KOG3504">
    <property type="taxonomic scope" value="Eukaryota"/>
</dbReference>
<dbReference type="GeneTree" id="ENSGT00390000007084"/>
<dbReference type="HOGENOM" id="CLU_169255_2_0_1"/>
<dbReference type="InParanoid" id="P05747"/>
<dbReference type="OMA" id="PRTNKYP"/>
<dbReference type="OrthoDB" id="996720at2759"/>
<dbReference type="BioCyc" id="YEAST:G3O-30506-MONOMER"/>
<dbReference type="Reactome" id="R-SCE-156827">
    <property type="pathway name" value="L13a-mediated translational silencing of Ceruloplasmin expression"/>
</dbReference>
<dbReference type="Reactome" id="R-SCE-1799339">
    <property type="pathway name" value="SRP-dependent cotranslational protein targeting to membrane"/>
</dbReference>
<dbReference type="Reactome" id="R-SCE-72689">
    <property type="pathway name" value="Formation of a pool of free 40S subunits"/>
</dbReference>
<dbReference type="Reactome" id="R-SCE-72706">
    <property type="pathway name" value="GTP hydrolysis and joining of the 60S ribosomal subunit"/>
</dbReference>
<dbReference type="Reactome" id="R-SCE-975956">
    <property type="pathway name" value="Nonsense Mediated Decay (NMD) independent of the Exon Junction Complex (EJC)"/>
</dbReference>
<dbReference type="Reactome" id="R-SCE-975957">
    <property type="pathway name" value="Nonsense Mediated Decay (NMD) enhanced by the Exon Junction Complex (EJC)"/>
</dbReference>
<dbReference type="BioGRID-ORCS" id="850592">
    <property type="hits" value="3 hits in 10 CRISPR screens"/>
</dbReference>
<dbReference type="ChiTaRS" id="RPL29">
    <property type="organism name" value="yeast"/>
</dbReference>
<dbReference type="PRO" id="PR:P05747"/>
<dbReference type="Proteomes" id="UP000002311">
    <property type="component" value="Chromosome VI"/>
</dbReference>
<dbReference type="RNAct" id="P05747">
    <property type="molecule type" value="protein"/>
</dbReference>
<dbReference type="GO" id="GO:0005737">
    <property type="term" value="C:cytoplasm"/>
    <property type="evidence" value="ECO:0007005"/>
    <property type="project" value="SGD"/>
</dbReference>
<dbReference type="GO" id="GO:0005829">
    <property type="term" value="C:cytosol"/>
    <property type="evidence" value="ECO:0000304"/>
    <property type="project" value="Reactome"/>
</dbReference>
<dbReference type="GO" id="GO:0022625">
    <property type="term" value="C:cytosolic large ribosomal subunit"/>
    <property type="evidence" value="ECO:0000314"/>
    <property type="project" value="SGD"/>
</dbReference>
<dbReference type="GO" id="GO:0003735">
    <property type="term" value="F:structural constituent of ribosome"/>
    <property type="evidence" value="ECO:0000314"/>
    <property type="project" value="SGD"/>
</dbReference>
<dbReference type="GO" id="GO:0002181">
    <property type="term" value="P:cytoplasmic translation"/>
    <property type="evidence" value="ECO:0000314"/>
    <property type="project" value="SGD"/>
</dbReference>
<dbReference type="Gene3D" id="6.10.140.1730">
    <property type="match status" value="1"/>
</dbReference>
<dbReference type="InterPro" id="IPR002673">
    <property type="entry name" value="Ribosomal_eL29"/>
</dbReference>
<dbReference type="PANTHER" id="PTHR12884">
    <property type="entry name" value="60S RIBOSOMAL PROTEIN L29"/>
    <property type="match status" value="1"/>
</dbReference>
<dbReference type="PANTHER" id="PTHR12884:SF0">
    <property type="entry name" value="60S RIBOSOMAL PROTEIN L29"/>
    <property type="match status" value="1"/>
</dbReference>
<dbReference type="Pfam" id="PF01779">
    <property type="entry name" value="Ribosomal_L29e"/>
    <property type="match status" value="1"/>
</dbReference>
<organism>
    <name type="scientific">Saccharomyces cerevisiae (strain ATCC 204508 / S288c)</name>
    <name type="common">Baker's yeast</name>
    <dbReference type="NCBI Taxonomy" id="559292"/>
    <lineage>
        <taxon>Eukaryota</taxon>
        <taxon>Fungi</taxon>
        <taxon>Dikarya</taxon>
        <taxon>Ascomycota</taxon>
        <taxon>Saccharomycotina</taxon>
        <taxon>Saccharomycetes</taxon>
        <taxon>Saccharomycetales</taxon>
        <taxon>Saccharomycetaceae</taxon>
        <taxon>Saccharomyces</taxon>
    </lineage>
</organism>
<protein>
    <recommendedName>
        <fullName evidence="7">Large ribosomal subunit protein eL29</fullName>
    </recommendedName>
    <alternativeName>
        <fullName evidence="8">60S ribosomal protein L29</fullName>
    </alternativeName>
    <alternativeName>
        <fullName>YL43</fullName>
    </alternativeName>
</protein>